<feature type="chain" id="PRO_0000160615" description="Arsenical resistance operon repressor">
    <location>
        <begin position="1"/>
        <end position="104"/>
    </location>
</feature>
<feature type="domain" description="HTH arsR-type" evidence="1">
    <location>
        <begin position="1"/>
        <end position="92"/>
    </location>
</feature>
<feature type="DNA-binding region" description="H-T-H motif" evidence="1">
    <location>
        <begin position="32"/>
        <end position="51"/>
    </location>
</feature>
<proteinExistence type="predicted"/>
<comment type="function">
    <text>Transcriptional repressor for the ars operon. ArsR is a trans-acting regulatory protein which controls its own expression. The repressive effect of ArsR is alleviated by oxyions of +III oxidation state of arsenic, antimony, and bismuth, as well as arsenate (As(V)).</text>
</comment>
<sequence length="104" mass="11866">MSYKELSTILKVLSDPSRLEILDLLSCGELCACDLLEHFQFSQPTLSHHMKSLVDNELVTTRKNGNKHMYQLNHEFLDYINQNLDIINTSDQGCACKNMKSGEC</sequence>
<evidence type="ECO:0000255" key="1">
    <source>
        <dbReference type="PROSITE-ProRule" id="PRU00340"/>
    </source>
</evidence>
<gene>
    <name type="primary">arsR</name>
</gene>
<accession>Q01256</accession>
<protein>
    <recommendedName>
        <fullName>Arsenical resistance operon repressor</fullName>
    </recommendedName>
</protein>
<geneLocation type="plasmid">
    <name>pSX267</name>
</geneLocation>
<keyword id="KW-0059">Arsenical resistance</keyword>
<keyword id="KW-0238">DNA-binding</keyword>
<keyword id="KW-0614">Plasmid</keyword>
<keyword id="KW-0678">Repressor</keyword>
<keyword id="KW-0804">Transcription</keyword>
<keyword id="KW-0805">Transcription regulation</keyword>
<name>ARSR_STAXY</name>
<organism>
    <name type="scientific">Staphylococcus xylosus</name>
    <dbReference type="NCBI Taxonomy" id="1288"/>
    <lineage>
        <taxon>Bacteria</taxon>
        <taxon>Bacillati</taxon>
        <taxon>Bacillota</taxon>
        <taxon>Bacilli</taxon>
        <taxon>Bacillales</taxon>
        <taxon>Staphylococcaceae</taxon>
        <taxon>Staphylococcus</taxon>
    </lineage>
</organism>
<dbReference type="EMBL" id="M80565">
    <property type="protein sequence ID" value="AAA27587.1"/>
    <property type="molecule type" value="Genomic_DNA"/>
</dbReference>
<dbReference type="PIR" id="A41902">
    <property type="entry name" value="A41902"/>
</dbReference>
<dbReference type="SMR" id="Q01256"/>
<dbReference type="GO" id="GO:0003677">
    <property type="term" value="F:DNA binding"/>
    <property type="evidence" value="ECO:0007669"/>
    <property type="project" value="UniProtKB-KW"/>
</dbReference>
<dbReference type="GO" id="GO:0003700">
    <property type="term" value="F:DNA-binding transcription factor activity"/>
    <property type="evidence" value="ECO:0007669"/>
    <property type="project" value="InterPro"/>
</dbReference>
<dbReference type="GO" id="GO:0046685">
    <property type="term" value="P:response to arsenic-containing substance"/>
    <property type="evidence" value="ECO:0007669"/>
    <property type="project" value="UniProtKB-KW"/>
</dbReference>
<dbReference type="CDD" id="cd00090">
    <property type="entry name" value="HTH_ARSR"/>
    <property type="match status" value="1"/>
</dbReference>
<dbReference type="Gene3D" id="1.10.10.10">
    <property type="entry name" value="Winged helix-like DNA-binding domain superfamily/Winged helix DNA-binding domain"/>
    <property type="match status" value="1"/>
</dbReference>
<dbReference type="InterPro" id="IPR011991">
    <property type="entry name" value="ArsR-like_HTH"/>
</dbReference>
<dbReference type="InterPro" id="IPR018334">
    <property type="entry name" value="ArsR_HTH"/>
</dbReference>
<dbReference type="InterPro" id="IPR001845">
    <property type="entry name" value="HTH_ArsR_DNA-bd_dom"/>
</dbReference>
<dbReference type="InterPro" id="IPR051081">
    <property type="entry name" value="HTH_MetalResp_TranReg"/>
</dbReference>
<dbReference type="InterPro" id="IPR036388">
    <property type="entry name" value="WH-like_DNA-bd_sf"/>
</dbReference>
<dbReference type="InterPro" id="IPR036390">
    <property type="entry name" value="WH_DNA-bd_sf"/>
</dbReference>
<dbReference type="NCBIfam" id="NF033788">
    <property type="entry name" value="HTH_metalloreg"/>
    <property type="match status" value="1"/>
</dbReference>
<dbReference type="PANTHER" id="PTHR33154:SF18">
    <property type="entry name" value="ARSENICAL RESISTANCE OPERON REPRESSOR"/>
    <property type="match status" value="1"/>
</dbReference>
<dbReference type="PANTHER" id="PTHR33154">
    <property type="entry name" value="TRANSCRIPTIONAL REGULATOR, ARSR FAMILY"/>
    <property type="match status" value="1"/>
</dbReference>
<dbReference type="Pfam" id="PF01022">
    <property type="entry name" value="HTH_5"/>
    <property type="match status" value="1"/>
</dbReference>
<dbReference type="PRINTS" id="PR00778">
    <property type="entry name" value="HTHARSR"/>
</dbReference>
<dbReference type="SMART" id="SM00418">
    <property type="entry name" value="HTH_ARSR"/>
    <property type="match status" value="1"/>
</dbReference>
<dbReference type="SUPFAM" id="SSF46785">
    <property type="entry name" value="Winged helix' DNA-binding domain"/>
    <property type="match status" value="1"/>
</dbReference>
<dbReference type="PROSITE" id="PS00846">
    <property type="entry name" value="HTH_ARSR_1"/>
    <property type="match status" value="1"/>
</dbReference>
<dbReference type="PROSITE" id="PS50987">
    <property type="entry name" value="HTH_ARSR_2"/>
    <property type="match status" value="1"/>
</dbReference>
<reference key="1">
    <citation type="journal article" date="1992" name="J. Bacteriol.">
        <title>Expression and regulation of the antimonite, arsenite, and arsenate resistance operon of Staphylococcus xylosus plasmid pSX267.</title>
        <authorList>
            <person name="Rosenstein R."/>
            <person name="Peschel A."/>
            <person name="Wieland B."/>
            <person name="Goetz F."/>
        </authorList>
    </citation>
    <scope>NUCLEOTIDE SEQUENCE [GENOMIC DNA]</scope>
    <source>
        <strain>DSM 20267 / Isolate C2A</strain>
    </source>
</reference>